<feature type="chain" id="PRO_0000257241" description="UDP-N-acetylmuramoylalanine--D-glutamate ligase">
    <location>
        <begin position="1"/>
        <end position="434"/>
    </location>
</feature>
<feature type="binding site" evidence="1">
    <location>
        <begin position="117"/>
        <end position="123"/>
    </location>
    <ligand>
        <name>ATP</name>
        <dbReference type="ChEBI" id="CHEBI:30616"/>
    </ligand>
</feature>
<protein>
    <recommendedName>
        <fullName evidence="1">UDP-N-acetylmuramoylalanine--D-glutamate ligase</fullName>
        <ecNumber evidence="1">6.3.2.9</ecNumber>
    </recommendedName>
    <alternativeName>
        <fullName evidence="1">D-glutamic acid-adding enzyme</fullName>
    </alternativeName>
    <alternativeName>
        <fullName evidence="1">UDP-N-acetylmuramoyl-L-alanyl-D-glutamate synthetase</fullName>
    </alternativeName>
</protein>
<keyword id="KW-0067">ATP-binding</keyword>
<keyword id="KW-0131">Cell cycle</keyword>
<keyword id="KW-0132">Cell division</keyword>
<keyword id="KW-0133">Cell shape</keyword>
<keyword id="KW-0961">Cell wall biogenesis/degradation</keyword>
<keyword id="KW-0963">Cytoplasm</keyword>
<keyword id="KW-0436">Ligase</keyword>
<keyword id="KW-0547">Nucleotide-binding</keyword>
<keyword id="KW-0573">Peptidoglycan synthesis</keyword>
<keyword id="KW-1185">Reference proteome</keyword>
<proteinExistence type="inferred from homology"/>
<name>MURD_SPHAL</name>
<accession>Q1GRX7</accession>
<evidence type="ECO:0000255" key="1">
    <source>
        <dbReference type="HAMAP-Rule" id="MF_00639"/>
    </source>
</evidence>
<sequence>MITSRAFAGRRYAVLGLARSGLATVEALVASGAGVTAWDDREEARDAAMALGADIGNPLDIDLIGFAGVVVSPGVPLNRHPIAAHARDAHVPVIGDIELFAEARSELPPHKVVGITGTNGKSTVTALIAHMLESAGVPVLMGGNIGLPILTREPLPEAGVYVLELSSFQIDLAHSLACDVAVLTNISPDHLDRYDGFEGYVASKARLFSLQHRDQVAIIATDDDPSKMIASRVNHRLHRVSAKDIDPVDQARWPALQGPHNAQNAVCAIAACRVLGLDDEAIERGLATFRSLPHRMELVGEARGARWYNDSKATNAASAAPALAAFPPAPDQRLHWIAGGQAKGDGLAACRPWFGHVKRAYLIGEAMAPFAAEIGDAIAIERSGDLASAVAQAAAAVQPGDIVLLSPACASFDQFKDYEARGEAFRAAVEALGA</sequence>
<gene>
    <name evidence="1" type="primary">murD</name>
    <name type="ordered locus">Sala_1883</name>
</gene>
<reference key="1">
    <citation type="journal article" date="2009" name="Proc. Natl. Acad. Sci. U.S.A.">
        <title>The genomic basis of trophic strategy in marine bacteria.</title>
        <authorList>
            <person name="Lauro F.M."/>
            <person name="McDougald D."/>
            <person name="Thomas T."/>
            <person name="Williams T.J."/>
            <person name="Egan S."/>
            <person name="Rice S."/>
            <person name="DeMaere M.Z."/>
            <person name="Ting L."/>
            <person name="Ertan H."/>
            <person name="Johnson J."/>
            <person name="Ferriera S."/>
            <person name="Lapidus A."/>
            <person name="Anderson I."/>
            <person name="Kyrpides N."/>
            <person name="Munk A.C."/>
            <person name="Detter C."/>
            <person name="Han C.S."/>
            <person name="Brown M.V."/>
            <person name="Robb F.T."/>
            <person name="Kjelleberg S."/>
            <person name="Cavicchioli R."/>
        </authorList>
    </citation>
    <scope>NUCLEOTIDE SEQUENCE [LARGE SCALE GENOMIC DNA]</scope>
    <source>
        <strain>DSM 13593 / LMG 18877 / RB2256</strain>
    </source>
</reference>
<organism>
    <name type="scientific">Sphingopyxis alaskensis (strain DSM 13593 / LMG 18877 / RB2256)</name>
    <name type="common">Sphingomonas alaskensis</name>
    <dbReference type="NCBI Taxonomy" id="317655"/>
    <lineage>
        <taxon>Bacteria</taxon>
        <taxon>Pseudomonadati</taxon>
        <taxon>Pseudomonadota</taxon>
        <taxon>Alphaproteobacteria</taxon>
        <taxon>Sphingomonadales</taxon>
        <taxon>Sphingomonadaceae</taxon>
        <taxon>Sphingopyxis</taxon>
    </lineage>
</organism>
<comment type="function">
    <text evidence="1">Cell wall formation. Catalyzes the addition of glutamate to the nucleotide precursor UDP-N-acetylmuramoyl-L-alanine (UMA).</text>
</comment>
<comment type="catalytic activity">
    <reaction evidence="1">
        <text>UDP-N-acetyl-alpha-D-muramoyl-L-alanine + D-glutamate + ATP = UDP-N-acetyl-alpha-D-muramoyl-L-alanyl-D-glutamate + ADP + phosphate + H(+)</text>
        <dbReference type="Rhea" id="RHEA:16429"/>
        <dbReference type="ChEBI" id="CHEBI:15378"/>
        <dbReference type="ChEBI" id="CHEBI:29986"/>
        <dbReference type="ChEBI" id="CHEBI:30616"/>
        <dbReference type="ChEBI" id="CHEBI:43474"/>
        <dbReference type="ChEBI" id="CHEBI:83898"/>
        <dbReference type="ChEBI" id="CHEBI:83900"/>
        <dbReference type="ChEBI" id="CHEBI:456216"/>
        <dbReference type="EC" id="6.3.2.9"/>
    </reaction>
</comment>
<comment type="pathway">
    <text evidence="1">Cell wall biogenesis; peptidoglycan biosynthesis.</text>
</comment>
<comment type="subcellular location">
    <subcellularLocation>
        <location evidence="1">Cytoplasm</location>
    </subcellularLocation>
</comment>
<comment type="similarity">
    <text evidence="1">Belongs to the MurCDEF family.</text>
</comment>
<dbReference type="EC" id="6.3.2.9" evidence="1"/>
<dbReference type="EMBL" id="CP000356">
    <property type="protein sequence ID" value="ABF53595.1"/>
    <property type="molecule type" value="Genomic_DNA"/>
</dbReference>
<dbReference type="RefSeq" id="WP_011542173.1">
    <property type="nucleotide sequence ID" value="NC_008048.1"/>
</dbReference>
<dbReference type="SMR" id="Q1GRX7"/>
<dbReference type="STRING" id="317655.Sala_1883"/>
<dbReference type="KEGG" id="sal:Sala_1883"/>
<dbReference type="eggNOG" id="COG0771">
    <property type="taxonomic scope" value="Bacteria"/>
</dbReference>
<dbReference type="HOGENOM" id="CLU_032540_3_0_5"/>
<dbReference type="OrthoDB" id="9809796at2"/>
<dbReference type="UniPathway" id="UPA00219"/>
<dbReference type="Proteomes" id="UP000006578">
    <property type="component" value="Chromosome"/>
</dbReference>
<dbReference type="GO" id="GO:0005737">
    <property type="term" value="C:cytoplasm"/>
    <property type="evidence" value="ECO:0007669"/>
    <property type="project" value="UniProtKB-SubCell"/>
</dbReference>
<dbReference type="GO" id="GO:0005524">
    <property type="term" value="F:ATP binding"/>
    <property type="evidence" value="ECO:0007669"/>
    <property type="project" value="UniProtKB-UniRule"/>
</dbReference>
<dbReference type="GO" id="GO:0004326">
    <property type="term" value="F:tetrahydrofolylpolyglutamate synthase activity"/>
    <property type="evidence" value="ECO:0007669"/>
    <property type="project" value="InterPro"/>
</dbReference>
<dbReference type="GO" id="GO:0008764">
    <property type="term" value="F:UDP-N-acetylmuramoylalanine-D-glutamate ligase activity"/>
    <property type="evidence" value="ECO:0007669"/>
    <property type="project" value="UniProtKB-UniRule"/>
</dbReference>
<dbReference type="GO" id="GO:0051301">
    <property type="term" value="P:cell division"/>
    <property type="evidence" value="ECO:0007669"/>
    <property type="project" value="UniProtKB-KW"/>
</dbReference>
<dbReference type="GO" id="GO:0071555">
    <property type="term" value="P:cell wall organization"/>
    <property type="evidence" value="ECO:0007669"/>
    <property type="project" value="UniProtKB-KW"/>
</dbReference>
<dbReference type="GO" id="GO:0009252">
    <property type="term" value="P:peptidoglycan biosynthetic process"/>
    <property type="evidence" value="ECO:0007669"/>
    <property type="project" value="UniProtKB-UniRule"/>
</dbReference>
<dbReference type="GO" id="GO:0008360">
    <property type="term" value="P:regulation of cell shape"/>
    <property type="evidence" value="ECO:0007669"/>
    <property type="project" value="UniProtKB-KW"/>
</dbReference>
<dbReference type="Gene3D" id="3.90.190.20">
    <property type="entry name" value="Mur ligase, C-terminal domain"/>
    <property type="match status" value="1"/>
</dbReference>
<dbReference type="Gene3D" id="3.40.1190.10">
    <property type="entry name" value="Mur-like, catalytic domain"/>
    <property type="match status" value="1"/>
</dbReference>
<dbReference type="Gene3D" id="3.40.50.720">
    <property type="entry name" value="NAD(P)-binding Rossmann-like Domain"/>
    <property type="match status" value="1"/>
</dbReference>
<dbReference type="HAMAP" id="MF_00639">
    <property type="entry name" value="MurD"/>
    <property type="match status" value="1"/>
</dbReference>
<dbReference type="InterPro" id="IPR018109">
    <property type="entry name" value="Folylpolyglutamate_synth_CS"/>
</dbReference>
<dbReference type="InterPro" id="IPR036565">
    <property type="entry name" value="Mur-like_cat_sf"/>
</dbReference>
<dbReference type="InterPro" id="IPR004101">
    <property type="entry name" value="Mur_ligase_C"/>
</dbReference>
<dbReference type="InterPro" id="IPR036615">
    <property type="entry name" value="Mur_ligase_C_dom_sf"/>
</dbReference>
<dbReference type="InterPro" id="IPR013221">
    <property type="entry name" value="Mur_ligase_cen"/>
</dbReference>
<dbReference type="InterPro" id="IPR005762">
    <property type="entry name" value="MurD"/>
</dbReference>
<dbReference type="NCBIfam" id="TIGR01087">
    <property type="entry name" value="murD"/>
    <property type="match status" value="1"/>
</dbReference>
<dbReference type="PANTHER" id="PTHR43692">
    <property type="entry name" value="UDP-N-ACETYLMURAMOYLALANINE--D-GLUTAMATE LIGASE"/>
    <property type="match status" value="1"/>
</dbReference>
<dbReference type="PANTHER" id="PTHR43692:SF1">
    <property type="entry name" value="UDP-N-ACETYLMURAMOYLALANINE--D-GLUTAMATE LIGASE"/>
    <property type="match status" value="1"/>
</dbReference>
<dbReference type="Pfam" id="PF02875">
    <property type="entry name" value="Mur_ligase_C"/>
    <property type="match status" value="1"/>
</dbReference>
<dbReference type="Pfam" id="PF08245">
    <property type="entry name" value="Mur_ligase_M"/>
    <property type="match status" value="1"/>
</dbReference>
<dbReference type="Pfam" id="PF21799">
    <property type="entry name" value="MurD-like_N"/>
    <property type="match status" value="1"/>
</dbReference>
<dbReference type="SUPFAM" id="SSF51984">
    <property type="entry name" value="MurCD N-terminal domain"/>
    <property type="match status" value="1"/>
</dbReference>
<dbReference type="SUPFAM" id="SSF53623">
    <property type="entry name" value="MurD-like peptide ligases, catalytic domain"/>
    <property type="match status" value="1"/>
</dbReference>
<dbReference type="SUPFAM" id="SSF53244">
    <property type="entry name" value="MurD-like peptide ligases, peptide-binding domain"/>
    <property type="match status" value="1"/>
</dbReference>